<feature type="chain" id="PRO_0000287527" description="S-adenosylmethionine synthase isoform type-1">
    <location>
        <begin position="1"/>
        <end position="396"/>
    </location>
</feature>
<feature type="region of interest" description="Flexible loop" evidence="1">
    <location>
        <begin position="114"/>
        <end position="126"/>
    </location>
</feature>
<feature type="binding site" evidence="2">
    <location>
        <position position="24"/>
    </location>
    <ligand>
        <name>Mg(2+)</name>
        <dbReference type="ChEBI" id="CHEBI:18420"/>
    </ligand>
</feature>
<feature type="binding site" description="in other chain" evidence="2">
    <location>
        <position position="30"/>
    </location>
    <ligand>
        <name>ATP</name>
        <dbReference type="ChEBI" id="CHEBI:30616"/>
        <note>ligand shared between two neighboring subunits</note>
    </ligand>
</feature>
<feature type="binding site" evidence="1">
    <location>
        <position position="58"/>
    </location>
    <ligand>
        <name>K(+)</name>
        <dbReference type="ChEBI" id="CHEBI:29103"/>
    </ligand>
</feature>
<feature type="binding site" description="in other chain" evidence="1">
    <location>
        <position position="71"/>
    </location>
    <ligand>
        <name>L-methionine</name>
        <dbReference type="ChEBI" id="CHEBI:57844"/>
        <note>ligand shared between two neighboring subunits</note>
    </ligand>
</feature>
<feature type="binding site" description="in other chain" evidence="1">
    <location>
        <position position="114"/>
    </location>
    <ligand>
        <name>L-methionine</name>
        <dbReference type="ChEBI" id="CHEBI:57844"/>
        <note>ligand shared between two neighboring subunits</note>
    </ligand>
</feature>
<feature type="binding site" description="in other chain" evidence="3">
    <location>
        <begin position="180"/>
        <end position="182"/>
    </location>
    <ligand>
        <name>ATP</name>
        <dbReference type="ChEBI" id="CHEBI:30616"/>
        <note>ligand shared between two neighboring subunits</note>
    </ligand>
</feature>
<feature type="binding site" description="in other chain" evidence="3">
    <location>
        <begin position="248"/>
        <end position="251"/>
    </location>
    <ligand>
        <name>ATP</name>
        <dbReference type="ChEBI" id="CHEBI:30616"/>
        <note>ligand shared between two neighboring subunits</note>
    </ligand>
</feature>
<feature type="binding site" description="in other chain" evidence="2">
    <location>
        <position position="259"/>
    </location>
    <ligand>
        <name>ATP</name>
        <dbReference type="ChEBI" id="CHEBI:30616"/>
        <note>ligand shared between two neighboring subunits</note>
    </ligand>
</feature>
<feature type="binding site" evidence="1">
    <location>
        <position position="259"/>
    </location>
    <ligand>
        <name>L-methionine</name>
        <dbReference type="ChEBI" id="CHEBI:57844"/>
        <note>ligand shared between two neighboring subunits</note>
    </ligand>
</feature>
<feature type="binding site" description="in other chain" evidence="1">
    <location>
        <begin position="265"/>
        <end position="266"/>
    </location>
    <ligand>
        <name>ATP</name>
        <dbReference type="ChEBI" id="CHEBI:30616"/>
        <note>ligand shared between two neighboring subunits</note>
    </ligand>
</feature>
<feature type="binding site" evidence="2">
    <location>
        <position position="282"/>
    </location>
    <ligand>
        <name>ATP</name>
        <dbReference type="ChEBI" id="CHEBI:30616"/>
        <note>ligand shared between two neighboring subunits</note>
    </ligand>
</feature>
<feature type="binding site" evidence="2">
    <location>
        <position position="286"/>
    </location>
    <ligand>
        <name>ATP</name>
        <dbReference type="ChEBI" id="CHEBI:30616"/>
        <note>ligand shared between two neighboring subunits</note>
    </ligand>
</feature>
<feature type="binding site" evidence="2">
    <location>
        <position position="290"/>
    </location>
    <ligand>
        <name>ATP</name>
        <dbReference type="ChEBI" id="CHEBI:30616"/>
        <note>ligand shared between two neighboring subunits</note>
    </ligand>
</feature>
<feature type="binding site" description="in other chain" evidence="1">
    <location>
        <position position="290"/>
    </location>
    <ligand>
        <name>L-methionine</name>
        <dbReference type="ChEBI" id="CHEBI:57844"/>
        <note>ligand shared between two neighboring subunits</note>
    </ligand>
</feature>
<feature type="modified residue" description="S-nitrosocysteine" evidence="2">
    <location>
        <position position="121"/>
    </location>
</feature>
<feature type="disulfide bond" evidence="2">
    <location>
        <begin position="35"/>
        <end position="61"/>
    </location>
</feature>
<comment type="function">
    <text evidence="2">Catalyzes the formation of S-adenosylmethionine from methionine and ATP. The reaction comprises two steps that are both catalyzed by the same enzyme: formation of S-adenosylmethionine (AdoMet) and triphosphate, and subsequent hydrolysis of the triphosphate.</text>
</comment>
<comment type="catalytic activity">
    <reaction evidence="2">
        <text>L-methionine + ATP + H2O = S-adenosyl-L-methionine + phosphate + diphosphate</text>
        <dbReference type="Rhea" id="RHEA:21080"/>
        <dbReference type="ChEBI" id="CHEBI:15377"/>
        <dbReference type="ChEBI" id="CHEBI:30616"/>
        <dbReference type="ChEBI" id="CHEBI:33019"/>
        <dbReference type="ChEBI" id="CHEBI:43474"/>
        <dbReference type="ChEBI" id="CHEBI:57844"/>
        <dbReference type="ChEBI" id="CHEBI:59789"/>
        <dbReference type="EC" id="2.5.1.6"/>
    </reaction>
</comment>
<comment type="cofactor">
    <cofactor evidence="2">
        <name>Mg(2+)</name>
        <dbReference type="ChEBI" id="CHEBI:18420"/>
    </cofactor>
    <text evidence="2">Binds 2 magnesium ions per subunit. The magnesium ions interact primarily with the substrate.</text>
</comment>
<comment type="cofactor">
    <cofactor evidence="2">
        <name>K(+)</name>
        <dbReference type="ChEBI" id="CHEBI:29103"/>
    </cofactor>
    <text evidence="2">Binds 1 potassium ion per subunit. The potassium ion interacts primarily with the substrate.</text>
</comment>
<comment type="pathway">
    <text evidence="2">Amino-acid biosynthesis; S-adenosyl-L-methionine biosynthesis; S-adenosyl-L-methionine from L-methionine: step 1/1.</text>
</comment>
<comment type="subunit">
    <text evidence="2">Homotetramer (MAT-I); dimer of dimers. Homodimer (MAT-III).</text>
</comment>
<comment type="PTM">
    <text evidence="2">S-nitrosylation of Cys-121 inactivates the enzyme.</text>
</comment>
<comment type="PTM">
    <text evidence="2">An intrachain disulfide bond can be formed. The protein structure shows that the relevant Cys residues are in a position that would permit formation of a disulfide bond.</text>
</comment>
<comment type="similarity">
    <text evidence="4">Belongs to the AdoMet synthase family.</text>
</comment>
<name>METK1_BOVIN</name>
<keyword id="KW-0067">ATP-binding</keyword>
<keyword id="KW-1015">Disulfide bond</keyword>
<keyword id="KW-0460">Magnesium</keyword>
<keyword id="KW-0479">Metal-binding</keyword>
<keyword id="KW-0547">Nucleotide-binding</keyword>
<keyword id="KW-0554">One-carbon metabolism</keyword>
<keyword id="KW-0630">Potassium</keyword>
<keyword id="KW-1185">Reference proteome</keyword>
<keyword id="KW-0702">S-nitrosylation</keyword>
<keyword id="KW-0808">Transferase</keyword>
<protein>
    <recommendedName>
        <fullName>S-adenosylmethionine synthase isoform type-1</fullName>
        <shortName>AdoMet synthase 1</shortName>
        <ecNumber evidence="2">2.5.1.6</ecNumber>
    </recommendedName>
    <alternativeName>
        <fullName>Methionine adenosyltransferase 1</fullName>
        <shortName>MAT 1</shortName>
    </alternativeName>
</protein>
<proteinExistence type="evidence at transcript level"/>
<gene>
    <name type="primary">MAT1A</name>
</gene>
<sequence>MNGPVDGLCDHSLSEEGAFMFTSESVGEGHPDKICDQISDAVLDAHLKQDPNAKVACETVCKTGMVLLCGEITSMAMVDYQRVVRETIQHIGYDDSAKGFDFKTCNVLVALEQQSPDIAQCVHLDRNEEDVGAGDQGLMFGYATDETEECMPLTIMLAHRLNARMAELRRSGQLPWLQPDSKTQVTVQYTQDNGAVIPMRVHTVVISVQHNEDITLEDMRRALKEQVIRAVVPARYLDEDTIYHLQPSGRFVIGGPQGDAGVTGRKIIVDTYGGWGAHGGGAFSGKDYTKVDRSAAYAARWVAKSLVKAGLCRRVLVQVSYAIGVAEPLSISIFTYGTSQKTERELLDVVNKNFDLRPGVIVRDLDLKKPIYQKTACYGHFGRSEFPWEVPKKLVF</sequence>
<organism>
    <name type="scientific">Bos taurus</name>
    <name type="common">Bovine</name>
    <dbReference type="NCBI Taxonomy" id="9913"/>
    <lineage>
        <taxon>Eukaryota</taxon>
        <taxon>Metazoa</taxon>
        <taxon>Chordata</taxon>
        <taxon>Craniata</taxon>
        <taxon>Vertebrata</taxon>
        <taxon>Euteleostomi</taxon>
        <taxon>Mammalia</taxon>
        <taxon>Eutheria</taxon>
        <taxon>Laurasiatheria</taxon>
        <taxon>Artiodactyla</taxon>
        <taxon>Ruminantia</taxon>
        <taxon>Pecora</taxon>
        <taxon>Bovidae</taxon>
        <taxon>Bovinae</taxon>
        <taxon>Bos</taxon>
    </lineage>
</organism>
<evidence type="ECO:0000250" key="1">
    <source>
        <dbReference type="UniProtKB" id="P0A817"/>
    </source>
</evidence>
<evidence type="ECO:0000250" key="2">
    <source>
        <dbReference type="UniProtKB" id="P13444"/>
    </source>
</evidence>
<evidence type="ECO:0000250" key="3">
    <source>
        <dbReference type="UniProtKB" id="Q00266"/>
    </source>
</evidence>
<evidence type="ECO:0000305" key="4"/>
<accession>Q2KJC6</accession>
<reference key="1">
    <citation type="submission" date="2005-09" db="EMBL/GenBank/DDBJ databases">
        <authorList>
            <consortium name="NIH - Mammalian Gene Collection (MGC) project"/>
        </authorList>
    </citation>
    <scope>NUCLEOTIDE SEQUENCE [LARGE SCALE MRNA]</scope>
    <source>
        <strain>Hereford</strain>
        <tissue>Fetal liver</tissue>
    </source>
</reference>
<dbReference type="EC" id="2.5.1.6" evidence="2"/>
<dbReference type="EMBL" id="BC105410">
    <property type="protein sequence ID" value="AAI05411.1"/>
    <property type="molecule type" value="mRNA"/>
</dbReference>
<dbReference type="RefSeq" id="NP_001039962.1">
    <property type="nucleotide sequence ID" value="NM_001046497.1"/>
</dbReference>
<dbReference type="SMR" id="Q2KJC6"/>
<dbReference type="FunCoup" id="Q2KJC6">
    <property type="interactions" value="550"/>
</dbReference>
<dbReference type="STRING" id="9913.ENSBTAP00000031255"/>
<dbReference type="PaxDb" id="9913-ENSBTAP00000031255"/>
<dbReference type="PeptideAtlas" id="Q2KJC6"/>
<dbReference type="GeneID" id="541078"/>
<dbReference type="KEGG" id="bta:541078"/>
<dbReference type="CTD" id="4143"/>
<dbReference type="eggNOG" id="KOG1506">
    <property type="taxonomic scope" value="Eukaryota"/>
</dbReference>
<dbReference type="InParanoid" id="Q2KJC6"/>
<dbReference type="OrthoDB" id="5852090at2759"/>
<dbReference type="UniPathway" id="UPA00315">
    <property type="reaction ID" value="UER00080"/>
</dbReference>
<dbReference type="Proteomes" id="UP000009136">
    <property type="component" value="Unplaced"/>
</dbReference>
<dbReference type="GO" id="GO:0005829">
    <property type="term" value="C:cytosol"/>
    <property type="evidence" value="ECO:0000318"/>
    <property type="project" value="GO_Central"/>
</dbReference>
<dbReference type="GO" id="GO:0005524">
    <property type="term" value="F:ATP binding"/>
    <property type="evidence" value="ECO:0007669"/>
    <property type="project" value="UniProtKB-KW"/>
</dbReference>
<dbReference type="GO" id="GO:0046872">
    <property type="term" value="F:metal ion binding"/>
    <property type="evidence" value="ECO:0007669"/>
    <property type="project" value="UniProtKB-KW"/>
</dbReference>
<dbReference type="GO" id="GO:0004478">
    <property type="term" value="F:methionine adenosyltransferase activity"/>
    <property type="evidence" value="ECO:0000250"/>
    <property type="project" value="UniProtKB"/>
</dbReference>
<dbReference type="GO" id="GO:0009087">
    <property type="term" value="P:methionine catabolic process"/>
    <property type="evidence" value="ECO:0000250"/>
    <property type="project" value="UniProtKB"/>
</dbReference>
<dbReference type="GO" id="GO:0006730">
    <property type="term" value="P:one-carbon metabolic process"/>
    <property type="evidence" value="ECO:0007669"/>
    <property type="project" value="UniProtKB-KW"/>
</dbReference>
<dbReference type="GO" id="GO:0006556">
    <property type="term" value="P:S-adenosylmethionine biosynthetic process"/>
    <property type="evidence" value="ECO:0000250"/>
    <property type="project" value="UniProtKB"/>
</dbReference>
<dbReference type="CDD" id="cd18079">
    <property type="entry name" value="S-AdoMet_synt"/>
    <property type="match status" value="1"/>
</dbReference>
<dbReference type="FunFam" id="3.30.300.10:FF:000001">
    <property type="entry name" value="S-adenosylmethionine synthase"/>
    <property type="match status" value="1"/>
</dbReference>
<dbReference type="FunFam" id="3.30.300.10:FF:000003">
    <property type="entry name" value="S-adenosylmethionine synthase"/>
    <property type="match status" value="1"/>
</dbReference>
<dbReference type="FunFam" id="3.30.300.10:FF:000004">
    <property type="entry name" value="S-adenosylmethionine synthase"/>
    <property type="match status" value="1"/>
</dbReference>
<dbReference type="Gene3D" id="3.30.300.10">
    <property type="match status" value="3"/>
</dbReference>
<dbReference type="HAMAP" id="MF_00086">
    <property type="entry name" value="S_AdoMet_synth1"/>
    <property type="match status" value="1"/>
</dbReference>
<dbReference type="InterPro" id="IPR022631">
    <property type="entry name" value="ADOMET_SYNTHASE_CS"/>
</dbReference>
<dbReference type="InterPro" id="IPR022630">
    <property type="entry name" value="S-AdoMet_synt_C"/>
</dbReference>
<dbReference type="InterPro" id="IPR022629">
    <property type="entry name" value="S-AdoMet_synt_central"/>
</dbReference>
<dbReference type="InterPro" id="IPR022628">
    <property type="entry name" value="S-AdoMet_synt_N"/>
</dbReference>
<dbReference type="InterPro" id="IPR002133">
    <property type="entry name" value="S-AdoMet_synthetase"/>
</dbReference>
<dbReference type="InterPro" id="IPR022636">
    <property type="entry name" value="S-AdoMet_synthetase_sfam"/>
</dbReference>
<dbReference type="NCBIfam" id="TIGR01034">
    <property type="entry name" value="metK"/>
    <property type="match status" value="1"/>
</dbReference>
<dbReference type="PANTHER" id="PTHR11964">
    <property type="entry name" value="S-ADENOSYLMETHIONINE SYNTHETASE"/>
    <property type="match status" value="1"/>
</dbReference>
<dbReference type="Pfam" id="PF02773">
    <property type="entry name" value="S-AdoMet_synt_C"/>
    <property type="match status" value="1"/>
</dbReference>
<dbReference type="Pfam" id="PF02772">
    <property type="entry name" value="S-AdoMet_synt_M"/>
    <property type="match status" value="1"/>
</dbReference>
<dbReference type="Pfam" id="PF00438">
    <property type="entry name" value="S-AdoMet_synt_N"/>
    <property type="match status" value="1"/>
</dbReference>
<dbReference type="PIRSF" id="PIRSF000497">
    <property type="entry name" value="MAT"/>
    <property type="match status" value="1"/>
</dbReference>
<dbReference type="SUPFAM" id="SSF55973">
    <property type="entry name" value="S-adenosylmethionine synthetase"/>
    <property type="match status" value="3"/>
</dbReference>
<dbReference type="PROSITE" id="PS00376">
    <property type="entry name" value="ADOMET_SYNTHASE_1"/>
    <property type="match status" value="1"/>
</dbReference>
<dbReference type="PROSITE" id="PS00377">
    <property type="entry name" value="ADOMET_SYNTHASE_2"/>
    <property type="match status" value="1"/>
</dbReference>